<sequence>MAIIMDGKALAVNMQEQLQEKVARLKEKEWIVPGLVVIMVGENPASQVYVRNKERAAKKAGFHSKTVNLSESISEEELIEVIEKYNQDPLFHGILVQLPLPNHINEMRILLAVDPKKDVDGFHPMNTGNLWNGRPQMVPCTPAGIMEILREYNVELEGKTAVIIGRSNIVGKPMAQLLLEKNATVTLTHSRTPHLAKVCNKADVLIVAIGRAKFVTEEFVKEGAVVIDVGINRDEEGKLCGDVDFDQVKEKVSMITPVPGGVGPMTITMLMEQTYQAALRSLKG</sequence>
<dbReference type="EC" id="1.5.1.5" evidence="1"/>
<dbReference type="EC" id="3.5.4.9" evidence="1"/>
<dbReference type="EMBL" id="CP000419">
    <property type="protein sequence ID" value="ABJ65922.1"/>
    <property type="molecule type" value="Genomic_DNA"/>
</dbReference>
<dbReference type="RefSeq" id="WP_011680925.1">
    <property type="nucleotide sequence ID" value="NC_008532.1"/>
</dbReference>
<dbReference type="SMR" id="Q03LK0"/>
<dbReference type="KEGG" id="ste:STER_0660"/>
<dbReference type="HOGENOM" id="CLU_034045_2_1_9"/>
<dbReference type="UniPathway" id="UPA00193"/>
<dbReference type="GO" id="GO:0005829">
    <property type="term" value="C:cytosol"/>
    <property type="evidence" value="ECO:0007669"/>
    <property type="project" value="TreeGrafter"/>
</dbReference>
<dbReference type="GO" id="GO:0004477">
    <property type="term" value="F:methenyltetrahydrofolate cyclohydrolase activity"/>
    <property type="evidence" value="ECO:0007669"/>
    <property type="project" value="UniProtKB-UniRule"/>
</dbReference>
<dbReference type="GO" id="GO:0004488">
    <property type="term" value="F:methylenetetrahydrofolate dehydrogenase (NADP+) activity"/>
    <property type="evidence" value="ECO:0007669"/>
    <property type="project" value="UniProtKB-UniRule"/>
</dbReference>
<dbReference type="GO" id="GO:0000105">
    <property type="term" value="P:L-histidine biosynthetic process"/>
    <property type="evidence" value="ECO:0007669"/>
    <property type="project" value="UniProtKB-KW"/>
</dbReference>
<dbReference type="GO" id="GO:0009086">
    <property type="term" value="P:methionine biosynthetic process"/>
    <property type="evidence" value="ECO:0007669"/>
    <property type="project" value="UniProtKB-KW"/>
</dbReference>
<dbReference type="GO" id="GO:0006164">
    <property type="term" value="P:purine nucleotide biosynthetic process"/>
    <property type="evidence" value="ECO:0007669"/>
    <property type="project" value="UniProtKB-KW"/>
</dbReference>
<dbReference type="GO" id="GO:0035999">
    <property type="term" value="P:tetrahydrofolate interconversion"/>
    <property type="evidence" value="ECO:0007669"/>
    <property type="project" value="UniProtKB-UniRule"/>
</dbReference>
<dbReference type="CDD" id="cd01080">
    <property type="entry name" value="NAD_bind_m-THF_DH_Cyclohyd"/>
    <property type="match status" value="1"/>
</dbReference>
<dbReference type="FunFam" id="3.40.50.720:FF:000094">
    <property type="entry name" value="Bifunctional protein FolD"/>
    <property type="match status" value="1"/>
</dbReference>
<dbReference type="FunFam" id="3.40.50.10860:FF:000005">
    <property type="entry name" value="C-1-tetrahydrofolate synthase, cytoplasmic, putative"/>
    <property type="match status" value="1"/>
</dbReference>
<dbReference type="Gene3D" id="3.40.50.10860">
    <property type="entry name" value="Leucine Dehydrogenase, chain A, domain 1"/>
    <property type="match status" value="1"/>
</dbReference>
<dbReference type="Gene3D" id="3.40.50.720">
    <property type="entry name" value="NAD(P)-binding Rossmann-like Domain"/>
    <property type="match status" value="1"/>
</dbReference>
<dbReference type="HAMAP" id="MF_01576">
    <property type="entry name" value="THF_DHG_CYH"/>
    <property type="match status" value="1"/>
</dbReference>
<dbReference type="InterPro" id="IPR046346">
    <property type="entry name" value="Aminoacid_DH-like_N_sf"/>
</dbReference>
<dbReference type="InterPro" id="IPR036291">
    <property type="entry name" value="NAD(P)-bd_dom_sf"/>
</dbReference>
<dbReference type="InterPro" id="IPR000672">
    <property type="entry name" value="THF_DH/CycHdrlase"/>
</dbReference>
<dbReference type="InterPro" id="IPR020630">
    <property type="entry name" value="THF_DH/CycHdrlase_cat_dom"/>
</dbReference>
<dbReference type="InterPro" id="IPR020867">
    <property type="entry name" value="THF_DH/CycHdrlase_CS"/>
</dbReference>
<dbReference type="InterPro" id="IPR020631">
    <property type="entry name" value="THF_DH/CycHdrlase_NAD-bd_dom"/>
</dbReference>
<dbReference type="NCBIfam" id="NF008058">
    <property type="entry name" value="PRK10792.1"/>
    <property type="match status" value="1"/>
</dbReference>
<dbReference type="NCBIfam" id="NF010776">
    <property type="entry name" value="PRK14179.1"/>
    <property type="match status" value="1"/>
</dbReference>
<dbReference type="NCBIfam" id="NF010783">
    <property type="entry name" value="PRK14186.1"/>
    <property type="match status" value="1"/>
</dbReference>
<dbReference type="PANTHER" id="PTHR48099:SF5">
    <property type="entry name" value="C-1-TETRAHYDROFOLATE SYNTHASE, CYTOPLASMIC"/>
    <property type="match status" value="1"/>
</dbReference>
<dbReference type="PANTHER" id="PTHR48099">
    <property type="entry name" value="C-1-TETRAHYDROFOLATE SYNTHASE, CYTOPLASMIC-RELATED"/>
    <property type="match status" value="1"/>
</dbReference>
<dbReference type="Pfam" id="PF00763">
    <property type="entry name" value="THF_DHG_CYH"/>
    <property type="match status" value="1"/>
</dbReference>
<dbReference type="Pfam" id="PF02882">
    <property type="entry name" value="THF_DHG_CYH_C"/>
    <property type="match status" value="1"/>
</dbReference>
<dbReference type="PRINTS" id="PR00085">
    <property type="entry name" value="THFDHDRGNASE"/>
</dbReference>
<dbReference type="SUPFAM" id="SSF53223">
    <property type="entry name" value="Aminoacid dehydrogenase-like, N-terminal domain"/>
    <property type="match status" value="1"/>
</dbReference>
<dbReference type="SUPFAM" id="SSF51735">
    <property type="entry name" value="NAD(P)-binding Rossmann-fold domains"/>
    <property type="match status" value="1"/>
</dbReference>
<dbReference type="PROSITE" id="PS00766">
    <property type="entry name" value="THF_DHG_CYH_1"/>
    <property type="match status" value="1"/>
</dbReference>
<dbReference type="PROSITE" id="PS00767">
    <property type="entry name" value="THF_DHG_CYH_2"/>
    <property type="match status" value="1"/>
</dbReference>
<organism>
    <name type="scientific">Streptococcus thermophilus (strain ATCC BAA-491 / LMD-9)</name>
    <dbReference type="NCBI Taxonomy" id="322159"/>
    <lineage>
        <taxon>Bacteria</taxon>
        <taxon>Bacillati</taxon>
        <taxon>Bacillota</taxon>
        <taxon>Bacilli</taxon>
        <taxon>Lactobacillales</taxon>
        <taxon>Streptococcaceae</taxon>
        <taxon>Streptococcus</taxon>
    </lineage>
</organism>
<accession>Q03LK0</accession>
<protein>
    <recommendedName>
        <fullName evidence="1">Bifunctional protein FolD</fullName>
    </recommendedName>
    <domain>
        <recommendedName>
            <fullName evidence="1">Methylenetetrahydrofolate dehydrogenase</fullName>
            <ecNumber evidence="1">1.5.1.5</ecNumber>
        </recommendedName>
    </domain>
    <domain>
        <recommendedName>
            <fullName evidence="1">Methenyltetrahydrofolate cyclohydrolase</fullName>
            <ecNumber evidence="1">3.5.4.9</ecNumber>
        </recommendedName>
    </domain>
</protein>
<gene>
    <name evidence="1" type="primary">folD</name>
    <name type="ordered locus">STER_0660</name>
</gene>
<reference key="1">
    <citation type="journal article" date="2006" name="Proc. Natl. Acad. Sci. U.S.A.">
        <title>Comparative genomics of the lactic acid bacteria.</title>
        <authorList>
            <person name="Makarova K.S."/>
            <person name="Slesarev A."/>
            <person name="Wolf Y.I."/>
            <person name="Sorokin A."/>
            <person name="Mirkin B."/>
            <person name="Koonin E.V."/>
            <person name="Pavlov A."/>
            <person name="Pavlova N."/>
            <person name="Karamychev V."/>
            <person name="Polouchine N."/>
            <person name="Shakhova V."/>
            <person name="Grigoriev I."/>
            <person name="Lou Y."/>
            <person name="Rohksar D."/>
            <person name="Lucas S."/>
            <person name="Huang K."/>
            <person name="Goodstein D.M."/>
            <person name="Hawkins T."/>
            <person name="Plengvidhya V."/>
            <person name="Welker D."/>
            <person name="Hughes J."/>
            <person name="Goh Y."/>
            <person name="Benson A."/>
            <person name="Baldwin K."/>
            <person name="Lee J.-H."/>
            <person name="Diaz-Muniz I."/>
            <person name="Dosti B."/>
            <person name="Smeianov V."/>
            <person name="Wechter W."/>
            <person name="Barabote R."/>
            <person name="Lorca G."/>
            <person name="Altermann E."/>
            <person name="Barrangou R."/>
            <person name="Ganesan B."/>
            <person name="Xie Y."/>
            <person name="Rawsthorne H."/>
            <person name="Tamir D."/>
            <person name="Parker C."/>
            <person name="Breidt F."/>
            <person name="Broadbent J.R."/>
            <person name="Hutkins R."/>
            <person name="O'Sullivan D."/>
            <person name="Steele J."/>
            <person name="Unlu G."/>
            <person name="Saier M.H. Jr."/>
            <person name="Klaenhammer T."/>
            <person name="Richardson P."/>
            <person name="Kozyavkin S."/>
            <person name="Weimer B.C."/>
            <person name="Mills D.A."/>
        </authorList>
    </citation>
    <scope>NUCLEOTIDE SEQUENCE [LARGE SCALE GENOMIC DNA]</scope>
    <source>
        <strain>ATCC BAA-491 / LMD-9</strain>
    </source>
</reference>
<comment type="function">
    <text evidence="1">Catalyzes the oxidation of 5,10-methylenetetrahydrofolate to 5,10-methenyltetrahydrofolate and then the hydrolysis of 5,10-methenyltetrahydrofolate to 10-formyltetrahydrofolate.</text>
</comment>
<comment type="catalytic activity">
    <reaction evidence="1">
        <text>(6R)-5,10-methylene-5,6,7,8-tetrahydrofolate + NADP(+) = (6R)-5,10-methenyltetrahydrofolate + NADPH</text>
        <dbReference type="Rhea" id="RHEA:22812"/>
        <dbReference type="ChEBI" id="CHEBI:15636"/>
        <dbReference type="ChEBI" id="CHEBI:57455"/>
        <dbReference type="ChEBI" id="CHEBI:57783"/>
        <dbReference type="ChEBI" id="CHEBI:58349"/>
        <dbReference type="EC" id="1.5.1.5"/>
    </reaction>
</comment>
<comment type="catalytic activity">
    <reaction evidence="1">
        <text>(6R)-5,10-methenyltetrahydrofolate + H2O = (6R)-10-formyltetrahydrofolate + H(+)</text>
        <dbReference type="Rhea" id="RHEA:23700"/>
        <dbReference type="ChEBI" id="CHEBI:15377"/>
        <dbReference type="ChEBI" id="CHEBI:15378"/>
        <dbReference type="ChEBI" id="CHEBI:57455"/>
        <dbReference type="ChEBI" id="CHEBI:195366"/>
        <dbReference type="EC" id="3.5.4.9"/>
    </reaction>
</comment>
<comment type="pathway">
    <text evidence="1">One-carbon metabolism; tetrahydrofolate interconversion.</text>
</comment>
<comment type="subunit">
    <text evidence="1">Homodimer.</text>
</comment>
<comment type="similarity">
    <text evidence="1">Belongs to the tetrahydrofolate dehydrogenase/cyclohydrolase family.</text>
</comment>
<proteinExistence type="inferred from homology"/>
<evidence type="ECO:0000255" key="1">
    <source>
        <dbReference type="HAMAP-Rule" id="MF_01576"/>
    </source>
</evidence>
<name>FOLD_STRTD</name>
<keyword id="KW-0028">Amino-acid biosynthesis</keyword>
<keyword id="KW-0368">Histidine biosynthesis</keyword>
<keyword id="KW-0378">Hydrolase</keyword>
<keyword id="KW-0486">Methionine biosynthesis</keyword>
<keyword id="KW-0511">Multifunctional enzyme</keyword>
<keyword id="KW-0521">NADP</keyword>
<keyword id="KW-0554">One-carbon metabolism</keyword>
<keyword id="KW-0560">Oxidoreductase</keyword>
<keyword id="KW-0658">Purine biosynthesis</keyword>
<feature type="chain" id="PRO_0000305887" description="Bifunctional protein FolD">
    <location>
        <begin position="1"/>
        <end position="284"/>
    </location>
</feature>
<feature type="binding site" evidence="1">
    <location>
        <begin position="165"/>
        <end position="167"/>
    </location>
    <ligand>
        <name>NADP(+)</name>
        <dbReference type="ChEBI" id="CHEBI:58349"/>
    </ligand>
</feature>
<feature type="binding site" evidence="1">
    <location>
        <position position="190"/>
    </location>
    <ligand>
        <name>NADP(+)</name>
        <dbReference type="ChEBI" id="CHEBI:58349"/>
    </ligand>
</feature>
<feature type="binding site" evidence="1">
    <location>
        <position position="231"/>
    </location>
    <ligand>
        <name>NADP(+)</name>
        <dbReference type="ChEBI" id="CHEBI:58349"/>
    </ligand>
</feature>